<evidence type="ECO:0000305" key="1"/>
<name>Y446_CHLTR</name>
<sequence length="183" mass="20930">MECLQQDTGVEAEQVQVQQQEENAVPVTSQRVSITQAAKLHNVTRQAIYVAIKQKKLKASKTTRWEIDLQDLEDYRRNRYSRAKSTYQGELLFDNEKGFYSVGQVASMLDVPEQKIYYATRIGAMKGERRGSAWVIHVSEVDRYRNDYLKKEAERKGKSLAAMREGFEALGADLLADAENFIS</sequence>
<comment type="similarity">
    <text evidence="1">Belongs to the EUO family.</text>
</comment>
<feature type="chain" id="PRO_0000218398" description="Uncharacterized protein CT_446">
    <location>
        <begin position="1"/>
        <end position="183"/>
    </location>
</feature>
<proteinExistence type="inferred from homology"/>
<dbReference type="EMBL" id="AE001273">
    <property type="protein sequence ID" value="AAC68045.1"/>
    <property type="molecule type" value="Genomic_DNA"/>
</dbReference>
<dbReference type="PIR" id="G71513">
    <property type="entry name" value="G71513"/>
</dbReference>
<dbReference type="RefSeq" id="NP_219959.1">
    <property type="nucleotide sequence ID" value="NC_000117.1"/>
</dbReference>
<dbReference type="RefSeq" id="WP_009871802.1">
    <property type="nucleotide sequence ID" value="NC_000117.1"/>
</dbReference>
<dbReference type="STRING" id="272561.CT_446"/>
<dbReference type="EnsemblBacteria" id="AAC68045">
    <property type="protein sequence ID" value="AAC68045"/>
    <property type="gene ID" value="CT_446"/>
</dbReference>
<dbReference type="GeneID" id="884219"/>
<dbReference type="KEGG" id="ctr:CT_446"/>
<dbReference type="PATRIC" id="fig|272561.5.peg.482"/>
<dbReference type="HOGENOM" id="CLU_138391_0_0_0"/>
<dbReference type="InParanoid" id="O84452"/>
<dbReference type="OrthoDB" id="17929at2"/>
<dbReference type="Proteomes" id="UP000000431">
    <property type="component" value="Chromosome"/>
</dbReference>
<dbReference type="InterPro" id="IPR041657">
    <property type="entry name" value="HTH_17"/>
</dbReference>
<dbReference type="Pfam" id="PF12728">
    <property type="entry name" value="HTH_17"/>
    <property type="match status" value="1"/>
</dbReference>
<reference key="1">
    <citation type="journal article" date="1998" name="Science">
        <title>Genome sequence of an obligate intracellular pathogen of humans: Chlamydia trachomatis.</title>
        <authorList>
            <person name="Stephens R.S."/>
            <person name="Kalman S."/>
            <person name="Lammel C.J."/>
            <person name="Fan J."/>
            <person name="Marathe R."/>
            <person name="Aravind L."/>
            <person name="Mitchell W.P."/>
            <person name="Olinger L."/>
            <person name="Tatusov R.L."/>
            <person name="Zhao Q."/>
            <person name="Koonin E.V."/>
            <person name="Davis R.W."/>
        </authorList>
    </citation>
    <scope>NUCLEOTIDE SEQUENCE [LARGE SCALE GENOMIC DNA]</scope>
    <source>
        <strain>ATCC VR-885 / DSM 19411 / UW-3/Cx</strain>
    </source>
</reference>
<accession>O84452</accession>
<protein>
    <recommendedName>
        <fullName>Uncharacterized protein CT_446</fullName>
    </recommendedName>
    <alternativeName>
        <fullName>EUO</fullName>
    </alternativeName>
</protein>
<gene>
    <name type="ordered locus">CT_446</name>
</gene>
<organism>
    <name type="scientific">Chlamydia trachomatis serovar D (strain ATCC VR-885 / DSM 19411 / UW-3/Cx)</name>
    <dbReference type="NCBI Taxonomy" id="272561"/>
    <lineage>
        <taxon>Bacteria</taxon>
        <taxon>Pseudomonadati</taxon>
        <taxon>Chlamydiota</taxon>
        <taxon>Chlamydiia</taxon>
        <taxon>Chlamydiales</taxon>
        <taxon>Chlamydiaceae</taxon>
        <taxon>Chlamydia/Chlamydophila group</taxon>
        <taxon>Chlamydia</taxon>
    </lineage>
</organism>
<keyword id="KW-1185">Reference proteome</keyword>